<proteinExistence type="inferred from homology"/>
<protein>
    <recommendedName>
        <fullName evidence="1">Large ribosomal subunit protein bL31</fullName>
    </recommendedName>
    <alternativeName>
        <fullName evidence="2">50S ribosomal protein L31</fullName>
    </alternativeName>
</protein>
<reference key="1">
    <citation type="journal article" date="2005" name="Arch. Microbiol.">
        <title>The genome sequence of an anaerobic aromatic-degrading denitrifying bacterium, strain EbN1.</title>
        <authorList>
            <person name="Rabus R."/>
            <person name="Kube M."/>
            <person name="Heider J."/>
            <person name="Beck A."/>
            <person name="Heitmann K."/>
            <person name="Widdel F."/>
            <person name="Reinhardt R."/>
        </authorList>
    </citation>
    <scope>NUCLEOTIDE SEQUENCE [LARGE SCALE GENOMIC DNA]</scope>
    <source>
        <strain>DSM 19018 / LMG 30748 / EbN1</strain>
    </source>
</reference>
<keyword id="KW-0479">Metal-binding</keyword>
<keyword id="KW-1185">Reference proteome</keyword>
<keyword id="KW-0687">Ribonucleoprotein</keyword>
<keyword id="KW-0689">Ribosomal protein</keyword>
<keyword id="KW-0694">RNA-binding</keyword>
<keyword id="KW-0699">rRNA-binding</keyword>
<keyword id="KW-0862">Zinc</keyword>
<accession>Q5P0T2</accession>
<dbReference type="EMBL" id="CR555306">
    <property type="protein sequence ID" value="CAI09082.1"/>
    <property type="molecule type" value="Genomic_DNA"/>
</dbReference>
<dbReference type="RefSeq" id="WP_011238763.1">
    <property type="nucleotide sequence ID" value="NC_006513.1"/>
</dbReference>
<dbReference type="SMR" id="Q5P0T2"/>
<dbReference type="STRING" id="76114.ebA5215"/>
<dbReference type="KEGG" id="eba:ebA5215"/>
<dbReference type="eggNOG" id="COG0254">
    <property type="taxonomic scope" value="Bacteria"/>
</dbReference>
<dbReference type="HOGENOM" id="CLU_114306_4_0_4"/>
<dbReference type="OrthoDB" id="9803251at2"/>
<dbReference type="Proteomes" id="UP000006552">
    <property type="component" value="Chromosome"/>
</dbReference>
<dbReference type="GO" id="GO:1990904">
    <property type="term" value="C:ribonucleoprotein complex"/>
    <property type="evidence" value="ECO:0007669"/>
    <property type="project" value="UniProtKB-KW"/>
</dbReference>
<dbReference type="GO" id="GO:0005840">
    <property type="term" value="C:ribosome"/>
    <property type="evidence" value="ECO:0007669"/>
    <property type="project" value="UniProtKB-KW"/>
</dbReference>
<dbReference type="GO" id="GO:0046872">
    <property type="term" value="F:metal ion binding"/>
    <property type="evidence" value="ECO:0007669"/>
    <property type="project" value="UniProtKB-KW"/>
</dbReference>
<dbReference type="GO" id="GO:0019843">
    <property type="term" value="F:rRNA binding"/>
    <property type="evidence" value="ECO:0007669"/>
    <property type="project" value="UniProtKB-KW"/>
</dbReference>
<dbReference type="GO" id="GO:0003735">
    <property type="term" value="F:structural constituent of ribosome"/>
    <property type="evidence" value="ECO:0007669"/>
    <property type="project" value="InterPro"/>
</dbReference>
<dbReference type="GO" id="GO:0006412">
    <property type="term" value="P:translation"/>
    <property type="evidence" value="ECO:0007669"/>
    <property type="project" value="UniProtKB-UniRule"/>
</dbReference>
<dbReference type="Gene3D" id="4.10.830.30">
    <property type="entry name" value="Ribosomal protein L31"/>
    <property type="match status" value="1"/>
</dbReference>
<dbReference type="HAMAP" id="MF_00501">
    <property type="entry name" value="Ribosomal_bL31_1"/>
    <property type="match status" value="1"/>
</dbReference>
<dbReference type="InterPro" id="IPR034704">
    <property type="entry name" value="Ribosomal_bL28/bL31-like_sf"/>
</dbReference>
<dbReference type="InterPro" id="IPR002150">
    <property type="entry name" value="Ribosomal_bL31"/>
</dbReference>
<dbReference type="InterPro" id="IPR027491">
    <property type="entry name" value="Ribosomal_bL31_A"/>
</dbReference>
<dbReference type="InterPro" id="IPR042105">
    <property type="entry name" value="Ribosomal_bL31_sf"/>
</dbReference>
<dbReference type="NCBIfam" id="TIGR00105">
    <property type="entry name" value="L31"/>
    <property type="match status" value="1"/>
</dbReference>
<dbReference type="NCBIfam" id="NF000612">
    <property type="entry name" value="PRK00019.1"/>
    <property type="match status" value="1"/>
</dbReference>
<dbReference type="NCBIfam" id="NF001809">
    <property type="entry name" value="PRK00528.1"/>
    <property type="match status" value="1"/>
</dbReference>
<dbReference type="PANTHER" id="PTHR33280">
    <property type="entry name" value="50S RIBOSOMAL PROTEIN L31, CHLOROPLASTIC"/>
    <property type="match status" value="1"/>
</dbReference>
<dbReference type="PANTHER" id="PTHR33280:SF6">
    <property type="entry name" value="LARGE RIBOSOMAL SUBUNIT PROTEIN BL31A"/>
    <property type="match status" value="1"/>
</dbReference>
<dbReference type="Pfam" id="PF01197">
    <property type="entry name" value="Ribosomal_L31"/>
    <property type="match status" value="1"/>
</dbReference>
<dbReference type="PRINTS" id="PR01249">
    <property type="entry name" value="RIBOSOMALL31"/>
</dbReference>
<dbReference type="SUPFAM" id="SSF143800">
    <property type="entry name" value="L28p-like"/>
    <property type="match status" value="1"/>
</dbReference>
<dbReference type="PROSITE" id="PS01143">
    <property type="entry name" value="RIBOSOMAL_L31"/>
    <property type="match status" value="1"/>
</dbReference>
<evidence type="ECO:0000255" key="1">
    <source>
        <dbReference type="HAMAP-Rule" id="MF_00501"/>
    </source>
</evidence>
<evidence type="ECO:0000305" key="2"/>
<feature type="chain" id="PRO_0000173076" description="Large ribosomal subunit protein bL31">
    <location>
        <begin position="1"/>
        <end position="72"/>
    </location>
</feature>
<feature type="binding site" evidence="1">
    <location>
        <position position="16"/>
    </location>
    <ligand>
        <name>Zn(2+)</name>
        <dbReference type="ChEBI" id="CHEBI:29105"/>
    </ligand>
</feature>
<feature type="binding site" evidence="1">
    <location>
        <position position="18"/>
    </location>
    <ligand>
        <name>Zn(2+)</name>
        <dbReference type="ChEBI" id="CHEBI:29105"/>
    </ligand>
</feature>
<feature type="binding site" evidence="1">
    <location>
        <position position="38"/>
    </location>
    <ligand>
        <name>Zn(2+)</name>
        <dbReference type="ChEBI" id="CHEBI:29105"/>
    </ligand>
</feature>
<feature type="binding site" evidence="1">
    <location>
        <position position="41"/>
    </location>
    <ligand>
        <name>Zn(2+)</name>
        <dbReference type="ChEBI" id="CHEBI:29105"/>
    </ligand>
</feature>
<name>RL31_AROAE</name>
<organism>
    <name type="scientific">Aromatoleum aromaticum (strain DSM 19018 / LMG 30748 / EbN1)</name>
    <name type="common">Azoarcus sp. (strain EbN1)</name>
    <dbReference type="NCBI Taxonomy" id="76114"/>
    <lineage>
        <taxon>Bacteria</taxon>
        <taxon>Pseudomonadati</taxon>
        <taxon>Pseudomonadota</taxon>
        <taxon>Betaproteobacteria</taxon>
        <taxon>Rhodocyclales</taxon>
        <taxon>Rhodocyclaceae</taxon>
        <taxon>Aromatoleum</taxon>
    </lineage>
</organism>
<sequence>MKADIHPKYAEVQVTCSCGNTFETRSTLGKPALHVEVCAACHPFYTGKQKIVDTAGRVERFRQKYGNVQRLG</sequence>
<gene>
    <name evidence="1" type="primary">rpmE</name>
    <name type="ordered locus">AZOSEA29570</name>
    <name type="ORF">ebA5215</name>
</gene>
<comment type="function">
    <text evidence="1">Binds the 23S rRNA.</text>
</comment>
<comment type="cofactor">
    <cofactor evidence="1">
        <name>Zn(2+)</name>
        <dbReference type="ChEBI" id="CHEBI:29105"/>
    </cofactor>
    <text evidence="1">Binds 1 zinc ion per subunit.</text>
</comment>
<comment type="subunit">
    <text evidence="1">Part of the 50S ribosomal subunit.</text>
</comment>
<comment type="similarity">
    <text evidence="1">Belongs to the bacterial ribosomal protein bL31 family. Type A subfamily.</text>
</comment>